<comment type="subcellular location">
    <subcellularLocation>
        <location evidence="1">Nucleus</location>
        <location evidence="1">Nucleolus</location>
    </subcellularLocation>
</comment>
<comment type="similarity">
    <text evidence="4">Belongs to the yippee family.</text>
</comment>
<reference key="1">
    <citation type="journal article" date="2004" name="Gene">
        <title>Identification and characterization of a novel gene family YPEL in a wide spectrum of eukaryotic species.</title>
        <authorList>
            <person name="Hosono K."/>
            <person name="Sasaki T."/>
            <person name="Minoshima S."/>
            <person name="Shimizu N."/>
        </authorList>
    </citation>
    <scope>NUCLEOTIDE SEQUENCE [MRNA]</scope>
</reference>
<sequence length="127" mass="14301">MPSCDPGPGPACLPTKTFRSYLPRCHRTYSCVHCRAHLAKHDELISKSFQGSHGRAYLFNSVVNVGCGPAEQRLLLTGLHSVADIFCESCKTTLGWKYEQAFETSQKYKEGKYIIEMSHMVKDNGWD</sequence>
<proteinExistence type="evidence at transcript level"/>
<evidence type="ECO:0000250" key="1"/>
<evidence type="ECO:0000250" key="2">
    <source>
        <dbReference type="UniProtKB" id="Q5XID5"/>
    </source>
</evidence>
<evidence type="ECO:0000255" key="3">
    <source>
        <dbReference type="PROSITE-ProRule" id="PRU01128"/>
    </source>
</evidence>
<evidence type="ECO:0000305" key="4"/>
<feature type="chain" id="PRO_0000212391" description="Protein yippee-like 4">
    <location>
        <begin position="1"/>
        <end position="127"/>
    </location>
</feature>
<feature type="domain" description="Yippee" evidence="3">
    <location>
        <begin position="27"/>
        <end position="124"/>
    </location>
</feature>
<feature type="binding site" evidence="3">
    <location>
        <position position="31"/>
    </location>
    <ligand>
        <name>Zn(2+)</name>
        <dbReference type="ChEBI" id="CHEBI:29105"/>
    </ligand>
</feature>
<feature type="binding site" evidence="3">
    <location>
        <position position="34"/>
    </location>
    <ligand>
        <name>Zn(2+)</name>
        <dbReference type="ChEBI" id="CHEBI:29105"/>
    </ligand>
</feature>
<feature type="binding site" evidence="3">
    <location>
        <position position="87"/>
    </location>
    <ligand>
        <name>Zn(2+)</name>
        <dbReference type="ChEBI" id="CHEBI:29105"/>
    </ligand>
</feature>
<feature type="binding site" evidence="3">
    <location>
        <position position="90"/>
    </location>
    <ligand>
        <name>Zn(2+)</name>
        <dbReference type="ChEBI" id="CHEBI:29105"/>
    </ligand>
</feature>
<feature type="modified residue" description="Phosphothreonine" evidence="2">
    <location>
        <position position="92"/>
    </location>
</feature>
<feature type="modified residue" description="Phosphothreonine" evidence="2">
    <location>
        <position position="93"/>
    </location>
</feature>
<feature type="modified residue" description="Phosphotyrosine" evidence="2">
    <location>
        <position position="98"/>
    </location>
</feature>
<protein>
    <recommendedName>
        <fullName>Protein yippee-like 4</fullName>
    </recommendedName>
</protein>
<dbReference type="EMBL" id="AB160980">
    <property type="protein sequence ID" value="BAD51389.1"/>
    <property type="molecule type" value="mRNA"/>
</dbReference>
<dbReference type="SMR" id="Q65Z56"/>
<dbReference type="GO" id="GO:0005730">
    <property type="term" value="C:nucleolus"/>
    <property type="evidence" value="ECO:0007669"/>
    <property type="project" value="UniProtKB-SubCell"/>
</dbReference>
<dbReference type="GO" id="GO:0046872">
    <property type="term" value="F:metal ion binding"/>
    <property type="evidence" value="ECO:0007669"/>
    <property type="project" value="UniProtKB-KW"/>
</dbReference>
<dbReference type="InterPro" id="IPR034751">
    <property type="entry name" value="Yippee"/>
</dbReference>
<dbReference type="InterPro" id="IPR004910">
    <property type="entry name" value="Yippee/Mis18/Cereblon"/>
</dbReference>
<dbReference type="InterPro" id="IPR039058">
    <property type="entry name" value="Yippee_fam"/>
</dbReference>
<dbReference type="PANTHER" id="PTHR13848">
    <property type="entry name" value="PROTEIN YIPPEE-LIKE CG15309-RELATED"/>
    <property type="match status" value="1"/>
</dbReference>
<dbReference type="Pfam" id="PF03226">
    <property type="entry name" value="Yippee-Mis18"/>
    <property type="match status" value="1"/>
</dbReference>
<dbReference type="PROSITE" id="PS51792">
    <property type="entry name" value="YIPPEE"/>
    <property type="match status" value="1"/>
</dbReference>
<name>YPEL4_CHLAE</name>
<gene>
    <name type="primary">YPEL4</name>
</gene>
<organism>
    <name type="scientific">Chlorocebus aethiops</name>
    <name type="common">Green monkey</name>
    <name type="synonym">Cercopithecus aethiops</name>
    <dbReference type="NCBI Taxonomy" id="9534"/>
    <lineage>
        <taxon>Eukaryota</taxon>
        <taxon>Metazoa</taxon>
        <taxon>Chordata</taxon>
        <taxon>Craniata</taxon>
        <taxon>Vertebrata</taxon>
        <taxon>Euteleostomi</taxon>
        <taxon>Mammalia</taxon>
        <taxon>Eutheria</taxon>
        <taxon>Euarchontoglires</taxon>
        <taxon>Primates</taxon>
        <taxon>Haplorrhini</taxon>
        <taxon>Catarrhini</taxon>
        <taxon>Cercopithecidae</taxon>
        <taxon>Cercopithecinae</taxon>
        <taxon>Chlorocebus</taxon>
    </lineage>
</organism>
<accession>Q65Z56</accession>
<keyword id="KW-0479">Metal-binding</keyword>
<keyword id="KW-0539">Nucleus</keyword>
<keyword id="KW-0597">Phosphoprotein</keyword>
<keyword id="KW-0862">Zinc</keyword>